<sequence>MSKQILILPGDGIGPEIMAEAVKVLELANDKFQLGFSLAHDVIGGAAIDKHGVPLADETLERARKADAVLLGAVGGPKWDKIERDIRPERGLLKIRSQLGLFANLRPAILYPQLADASSLKPEIVSGLDILIVRELTGGIYFGAPRGQRELEGGERQAYDTLPYSESEVRRIARVGFDMARVRGKKLCSVDKANVLASSQLWREVVEDVAKDYPDVELSHMYVDNAAMQLVRAPKQFDVMVTDNMFGDILSDEASMLTGSIGMLPSASLDADNKGMYEPCHGSAPDIAGLGIANPLATILSVSMMLRYSFNQSAAAEAIEKAVSLVLDQGLRTGDIFSEGCRKVGTQEMGDAVVAALRNL</sequence>
<organism>
    <name type="scientific">Pseudomonas putida (strain ATCC 47054 / DSM 6125 / CFBP 8728 / NCIMB 11950 / KT2440)</name>
    <dbReference type="NCBI Taxonomy" id="160488"/>
    <lineage>
        <taxon>Bacteria</taxon>
        <taxon>Pseudomonadati</taxon>
        <taxon>Pseudomonadota</taxon>
        <taxon>Gammaproteobacteria</taxon>
        <taxon>Pseudomonadales</taxon>
        <taxon>Pseudomonadaceae</taxon>
        <taxon>Pseudomonas</taxon>
    </lineage>
</organism>
<dbReference type="EC" id="1.1.1.85" evidence="1"/>
<dbReference type="EMBL" id="AE015451">
    <property type="protein sequence ID" value="AAN67603.1"/>
    <property type="molecule type" value="Genomic_DNA"/>
</dbReference>
<dbReference type="RefSeq" id="NP_744139.1">
    <property type="nucleotide sequence ID" value="NC_002947.4"/>
</dbReference>
<dbReference type="RefSeq" id="WP_003247194.1">
    <property type="nucleotide sequence ID" value="NZ_CP169744.1"/>
</dbReference>
<dbReference type="SMR" id="Q88LE5"/>
<dbReference type="STRING" id="160488.PP_1988"/>
<dbReference type="PaxDb" id="160488-PP_1988"/>
<dbReference type="GeneID" id="83681507"/>
<dbReference type="KEGG" id="ppu:PP_1988"/>
<dbReference type="PATRIC" id="fig|160488.4.peg.2097"/>
<dbReference type="eggNOG" id="COG0473">
    <property type="taxonomic scope" value="Bacteria"/>
</dbReference>
<dbReference type="HOGENOM" id="CLU_031953_0_3_6"/>
<dbReference type="OrthoDB" id="9767905at2"/>
<dbReference type="PhylomeDB" id="Q88LE5"/>
<dbReference type="BioCyc" id="PPUT160488:G1G01-2119-MONOMER"/>
<dbReference type="UniPathway" id="UPA00048">
    <property type="reaction ID" value="UER00072"/>
</dbReference>
<dbReference type="Proteomes" id="UP000000556">
    <property type="component" value="Chromosome"/>
</dbReference>
<dbReference type="GO" id="GO:0005829">
    <property type="term" value="C:cytosol"/>
    <property type="evidence" value="ECO:0007669"/>
    <property type="project" value="TreeGrafter"/>
</dbReference>
<dbReference type="GO" id="GO:0003862">
    <property type="term" value="F:3-isopropylmalate dehydrogenase activity"/>
    <property type="evidence" value="ECO:0007669"/>
    <property type="project" value="UniProtKB-UniRule"/>
</dbReference>
<dbReference type="GO" id="GO:0000287">
    <property type="term" value="F:magnesium ion binding"/>
    <property type="evidence" value="ECO:0007669"/>
    <property type="project" value="InterPro"/>
</dbReference>
<dbReference type="GO" id="GO:0051287">
    <property type="term" value="F:NAD binding"/>
    <property type="evidence" value="ECO:0007669"/>
    <property type="project" value="InterPro"/>
</dbReference>
<dbReference type="GO" id="GO:0009098">
    <property type="term" value="P:L-leucine biosynthetic process"/>
    <property type="evidence" value="ECO:0007669"/>
    <property type="project" value="UniProtKB-UniRule"/>
</dbReference>
<dbReference type="FunFam" id="3.40.718.10:FF:000004">
    <property type="entry name" value="3-isopropylmalate dehydrogenase"/>
    <property type="match status" value="1"/>
</dbReference>
<dbReference type="Gene3D" id="3.40.718.10">
    <property type="entry name" value="Isopropylmalate Dehydrogenase"/>
    <property type="match status" value="1"/>
</dbReference>
<dbReference type="HAMAP" id="MF_01033">
    <property type="entry name" value="LeuB_type1"/>
    <property type="match status" value="1"/>
</dbReference>
<dbReference type="InterPro" id="IPR019818">
    <property type="entry name" value="IsoCit/isopropylmalate_DH_CS"/>
</dbReference>
<dbReference type="InterPro" id="IPR024084">
    <property type="entry name" value="IsoPropMal-DH-like_dom"/>
</dbReference>
<dbReference type="InterPro" id="IPR004429">
    <property type="entry name" value="Isopropylmalate_DH"/>
</dbReference>
<dbReference type="NCBIfam" id="TIGR00169">
    <property type="entry name" value="leuB"/>
    <property type="match status" value="1"/>
</dbReference>
<dbReference type="PANTHER" id="PTHR42979">
    <property type="entry name" value="3-ISOPROPYLMALATE DEHYDROGENASE"/>
    <property type="match status" value="1"/>
</dbReference>
<dbReference type="PANTHER" id="PTHR42979:SF1">
    <property type="entry name" value="3-ISOPROPYLMALATE DEHYDROGENASE"/>
    <property type="match status" value="1"/>
</dbReference>
<dbReference type="Pfam" id="PF00180">
    <property type="entry name" value="Iso_dh"/>
    <property type="match status" value="1"/>
</dbReference>
<dbReference type="SMART" id="SM01329">
    <property type="entry name" value="Iso_dh"/>
    <property type="match status" value="1"/>
</dbReference>
<dbReference type="SUPFAM" id="SSF53659">
    <property type="entry name" value="Isocitrate/Isopropylmalate dehydrogenase-like"/>
    <property type="match status" value="1"/>
</dbReference>
<dbReference type="PROSITE" id="PS00470">
    <property type="entry name" value="IDH_IMDH"/>
    <property type="match status" value="1"/>
</dbReference>
<name>LEU3_PSEPK</name>
<gene>
    <name evidence="1" type="primary">leuB</name>
    <name type="ordered locus">PP_1988</name>
</gene>
<accession>Q88LE5</accession>
<proteinExistence type="inferred from homology"/>
<evidence type="ECO:0000255" key="1">
    <source>
        <dbReference type="HAMAP-Rule" id="MF_01033"/>
    </source>
</evidence>
<feature type="chain" id="PRO_0000083729" description="3-isopropylmalate dehydrogenase">
    <location>
        <begin position="1"/>
        <end position="360"/>
    </location>
</feature>
<feature type="binding site" evidence="1">
    <location>
        <begin position="76"/>
        <end position="89"/>
    </location>
    <ligand>
        <name>NAD(+)</name>
        <dbReference type="ChEBI" id="CHEBI:57540"/>
    </ligand>
</feature>
<feature type="binding site" evidence="1">
    <location>
        <position position="96"/>
    </location>
    <ligand>
        <name>substrate</name>
    </ligand>
</feature>
<feature type="binding site" evidence="1">
    <location>
        <position position="106"/>
    </location>
    <ligand>
        <name>substrate</name>
    </ligand>
</feature>
<feature type="binding site" evidence="1">
    <location>
        <position position="134"/>
    </location>
    <ligand>
        <name>substrate</name>
    </ligand>
</feature>
<feature type="binding site" evidence="1">
    <location>
        <position position="224"/>
    </location>
    <ligand>
        <name>Mg(2+)</name>
        <dbReference type="ChEBI" id="CHEBI:18420"/>
    </ligand>
</feature>
<feature type="binding site" evidence="1">
    <location>
        <position position="224"/>
    </location>
    <ligand>
        <name>substrate</name>
    </ligand>
</feature>
<feature type="binding site" evidence="1">
    <location>
        <position position="248"/>
    </location>
    <ligand>
        <name>Mg(2+)</name>
        <dbReference type="ChEBI" id="CHEBI:18420"/>
    </ligand>
</feature>
<feature type="binding site" evidence="1">
    <location>
        <position position="252"/>
    </location>
    <ligand>
        <name>Mg(2+)</name>
        <dbReference type="ChEBI" id="CHEBI:18420"/>
    </ligand>
</feature>
<feature type="binding site" evidence="1">
    <location>
        <begin position="282"/>
        <end position="294"/>
    </location>
    <ligand>
        <name>NAD(+)</name>
        <dbReference type="ChEBI" id="CHEBI:57540"/>
    </ligand>
</feature>
<feature type="site" description="Important for catalysis" evidence="1">
    <location>
        <position position="141"/>
    </location>
</feature>
<feature type="site" description="Important for catalysis" evidence="1">
    <location>
        <position position="192"/>
    </location>
</feature>
<comment type="function">
    <text evidence="1">Catalyzes the oxidation of 3-carboxy-2-hydroxy-4-methylpentanoate (3-isopropylmalate) to 3-carboxy-4-methyl-2-oxopentanoate. The product decarboxylates to 4-methyl-2 oxopentanoate.</text>
</comment>
<comment type="catalytic activity">
    <reaction evidence="1">
        <text>(2R,3S)-3-isopropylmalate + NAD(+) = 4-methyl-2-oxopentanoate + CO2 + NADH</text>
        <dbReference type="Rhea" id="RHEA:32271"/>
        <dbReference type="ChEBI" id="CHEBI:16526"/>
        <dbReference type="ChEBI" id="CHEBI:17865"/>
        <dbReference type="ChEBI" id="CHEBI:35121"/>
        <dbReference type="ChEBI" id="CHEBI:57540"/>
        <dbReference type="ChEBI" id="CHEBI:57945"/>
        <dbReference type="EC" id="1.1.1.85"/>
    </reaction>
</comment>
<comment type="cofactor">
    <cofactor evidence="1">
        <name>Mg(2+)</name>
        <dbReference type="ChEBI" id="CHEBI:18420"/>
    </cofactor>
    <cofactor evidence="1">
        <name>Mn(2+)</name>
        <dbReference type="ChEBI" id="CHEBI:29035"/>
    </cofactor>
    <text evidence="1">Binds 1 Mg(2+) or Mn(2+) ion per subunit.</text>
</comment>
<comment type="pathway">
    <text evidence="1">Amino-acid biosynthesis; L-leucine biosynthesis; L-leucine from 3-methyl-2-oxobutanoate: step 3/4.</text>
</comment>
<comment type="subunit">
    <text evidence="1">Homodimer.</text>
</comment>
<comment type="subcellular location">
    <subcellularLocation>
        <location evidence="1">Cytoplasm</location>
    </subcellularLocation>
</comment>
<comment type="similarity">
    <text evidence="1">Belongs to the isocitrate and isopropylmalate dehydrogenases family. LeuB type 1 subfamily.</text>
</comment>
<keyword id="KW-0028">Amino-acid biosynthesis</keyword>
<keyword id="KW-0100">Branched-chain amino acid biosynthesis</keyword>
<keyword id="KW-0963">Cytoplasm</keyword>
<keyword id="KW-0432">Leucine biosynthesis</keyword>
<keyword id="KW-0460">Magnesium</keyword>
<keyword id="KW-0464">Manganese</keyword>
<keyword id="KW-0479">Metal-binding</keyword>
<keyword id="KW-0520">NAD</keyword>
<keyword id="KW-0560">Oxidoreductase</keyword>
<keyword id="KW-1185">Reference proteome</keyword>
<protein>
    <recommendedName>
        <fullName evidence="1">3-isopropylmalate dehydrogenase</fullName>
        <ecNumber evidence="1">1.1.1.85</ecNumber>
    </recommendedName>
    <alternativeName>
        <fullName evidence="1">3-IPM-DH</fullName>
    </alternativeName>
    <alternativeName>
        <fullName evidence="1">Beta-IPM dehydrogenase</fullName>
        <shortName evidence="1">IMDH</shortName>
    </alternativeName>
</protein>
<reference key="1">
    <citation type="journal article" date="2002" name="Environ. Microbiol.">
        <title>Complete genome sequence and comparative analysis of the metabolically versatile Pseudomonas putida KT2440.</title>
        <authorList>
            <person name="Nelson K.E."/>
            <person name="Weinel C."/>
            <person name="Paulsen I.T."/>
            <person name="Dodson R.J."/>
            <person name="Hilbert H."/>
            <person name="Martins dos Santos V.A.P."/>
            <person name="Fouts D.E."/>
            <person name="Gill S.R."/>
            <person name="Pop M."/>
            <person name="Holmes M."/>
            <person name="Brinkac L.M."/>
            <person name="Beanan M.J."/>
            <person name="DeBoy R.T."/>
            <person name="Daugherty S.C."/>
            <person name="Kolonay J.F."/>
            <person name="Madupu R."/>
            <person name="Nelson W.C."/>
            <person name="White O."/>
            <person name="Peterson J.D."/>
            <person name="Khouri H.M."/>
            <person name="Hance I."/>
            <person name="Chris Lee P."/>
            <person name="Holtzapple E.K."/>
            <person name="Scanlan D."/>
            <person name="Tran K."/>
            <person name="Moazzez A."/>
            <person name="Utterback T.R."/>
            <person name="Rizzo M."/>
            <person name="Lee K."/>
            <person name="Kosack D."/>
            <person name="Moestl D."/>
            <person name="Wedler H."/>
            <person name="Lauber J."/>
            <person name="Stjepandic D."/>
            <person name="Hoheisel J."/>
            <person name="Straetz M."/>
            <person name="Heim S."/>
            <person name="Kiewitz C."/>
            <person name="Eisen J.A."/>
            <person name="Timmis K.N."/>
            <person name="Duesterhoeft A."/>
            <person name="Tuemmler B."/>
            <person name="Fraser C.M."/>
        </authorList>
    </citation>
    <scope>NUCLEOTIDE SEQUENCE [LARGE SCALE GENOMIC DNA]</scope>
    <source>
        <strain>ATCC 47054 / DSM 6125 / CFBP 8728 / NCIMB 11950 / KT2440</strain>
    </source>
</reference>